<accession>P25934</accession>
<organism>
    <name type="scientific">Selenastrum minutum</name>
    <dbReference type="NCBI Taxonomy" id="39955"/>
    <lineage>
        <taxon>Eukaryota</taxon>
        <taxon>Viridiplantae</taxon>
        <taxon>Chlorophyta</taxon>
        <taxon>core chlorophytes</taxon>
        <taxon>Chlorophyceae</taxon>
        <taxon>CS clade</taxon>
        <taxon>Sphaeropleales</taxon>
        <taxon>Selenastraceae</taxon>
        <taxon>Monoraphidium</taxon>
    </lineage>
</organism>
<keyword id="KW-0067">ATP-binding</keyword>
<keyword id="KW-0113">Calvin cycle</keyword>
<keyword id="KW-0903">Direct protein sequencing</keyword>
<keyword id="KW-0418">Kinase</keyword>
<keyword id="KW-0547">Nucleotide-binding</keyword>
<keyword id="KW-0808">Transferase</keyword>
<dbReference type="EC" id="2.7.1.19"/>
<dbReference type="UniPathway" id="UPA00116"/>
<dbReference type="GO" id="GO:0005524">
    <property type="term" value="F:ATP binding"/>
    <property type="evidence" value="ECO:0007669"/>
    <property type="project" value="UniProtKB-KW"/>
</dbReference>
<dbReference type="GO" id="GO:0008974">
    <property type="term" value="F:phosphoribulokinase activity"/>
    <property type="evidence" value="ECO:0007669"/>
    <property type="project" value="UniProtKB-EC"/>
</dbReference>
<dbReference type="GO" id="GO:0019253">
    <property type="term" value="P:reductive pentose-phosphate cycle"/>
    <property type="evidence" value="ECO:0007669"/>
    <property type="project" value="UniProtKB-UniPathway"/>
</dbReference>
<evidence type="ECO:0000305" key="1"/>
<comment type="catalytic activity">
    <reaction>
        <text>D-ribulose 5-phosphate + ATP = D-ribulose 1,5-bisphosphate + ADP + H(+)</text>
        <dbReference type="Rhea" id="RHEA:19365"/>
        <dbReference type="ChEBI" id="CHEBI:15378"/>
        <dbReference type="ChEBI" id="CHEBI:30616"/>
        <dbReference type="ChEBI" id="CHEBI:57870"/>
        <dbReference type="ChEBI" id="CHEBI:58121"/>
        <dbReference type="ChEBI" id="CHEBI:456216"/>
        <dbReference type="EC" id="2.7.1.19"/>
    </reaction>
</comment>
<comment type="pathway">
    <text>Carbohydrate biosynthesis; Calvin cycle.</text>
</comment>
<comment type="subunit">
    <text>Heterodimer of a 40 kDa and a 41 kDa subunit.</text>
</comment>
<comment type="similarity">
    <text evidence="1">Belongs to the phosphoribulokinase family.</text>
</comment>
<feature type="chain" id="PRO_0000201963" description="Phosphoribulokinase, 41 kDa subunit">
    <location>
        <begin position="1"/>
        <end position="15" status="greater than"/>
    </location>
</feature>
<feature type="non-terminal residue">
    <location>
        <position position="15"/>
    </location>
</feature>
<sequence length="15" mass="1456">ADEKXVVIGLAADSG</sequence>
<protein>
    <recommendedName>
        <fullName>Phosphoribulokinase, 41 kDa subunit</fullName>
        <ecNumber>2.7.1.19</ecNumber>
    </recommendedName>
    <alternativeName>
        <fullName>Phosphopentokinase</fullName>
    </alternativeName>
</protein>
<name>KPPR2_SELMI</name>
<reference key="1">
    <citation type="journal article" date="1992" name="Plant Physiol.">
        <title>Purification and molecular and immunological characterization of a unique phosphoribulokinase from the green alga Selenastrum minutum.</title>
        <authorList>
            <person name="Lin M."/>
            <person name="Turpin D.H."/>
        </authorList>
    </citation>
    <scope>PROTEIN SEQUENCE</scope>
</reference>
<proteinExistence type="evidence at protein level"/>